<protein>
    <recommendedName>
        <fullName evidence="5">Aconitate hydratase A</fullName>
        <shortName evidence="5">Aconitase</shortName>
        <ecNumber evidence="4">4.2.1.3</ecNumber>
    </recommendedName>
    <alternativeName>
        <fullName evidence="3">(2R,3S)-2-methylisocitrate dehydratase</fullName>
    </alternativeName>
    <alternativeName>
        <fullName evidence="3">(2S,3R)-3-hydroxybutane-1,2,3-tricarboxylate dehydratase</fullName>
    </alternativeName>
    <alternativeName>
        <fullName evidence="1">Iron-responsive protein-like</fullName>
        <shortName evidence="1">IRP-like</shortName>
    </alternativeName>
    <alternativeName>
        <fullName evidence="3">Probable 2-methyl-cis-aconitate hydratase</fullName>
        <ecNumber evidence="3">4.2.1.99</ecNumber>
    </alternativeName>
    <alternativeName>
        <fullName evidence="1">RNA-binding protein</fullName>
    </alternativeName>
</protein>
<gene>
    <name evidence="5" type="primary">acnM</name>
</gene>
<feature type="chain" id="PRO_0000432978" description="Aconitate hydratase A">
    <location>
        <begin position="1"/>
        <end position="869"/>
    </location>
</feature>
<feature type="binding site" evidence="2">
    <location>
        <position position="411"/>
    </location>
    <ligand>
        <name>[4Fe-4S] cluster</name>
        <dbReference type="ChEBI" id="CHEBI:49883"/>
    </ligand>
</feature>
<feature type="binding site" evidence="2">
    <location>
        <position position="477"/>
    </location>
    <ligand>
        <name>[4Fe-4S] cluster</name>
        <dbReference type="ChEBI" id="CHEBI:49883"/>
    </ligand>
</feature>
<feature type="binding site" evidence="2">
    <location>
        <position position="480"/>
    </location>
    <ligand>
        <name>[4Fe-4S] cluster</name>
        <dbReference type="ChEBI" id="CHEBI:49883"/>
    </ligand>
</feature>
<proteinExistence type="evidence at protein level"/>
<sequence>MNSANRKPLPGTKLDYFDARAAVEAIQPGAYDKLPYTSRVLAENLVRRCDPATLTDSLLQLVGRKRDLDFPWFPARVVCHDILGQTALVDLAGLRDAIADQGGDPAKVNPVVPVQLIVDHSLAVECGGFDPDAFAKNRAIEDRRNEDRFHFIDWTKQAFKNVDVIPPGNGIMHQINLEKMSPVIHADNGVAYPDTCVGTDSHTPHVDALGVIAIGVGGLEAENVMLGRASWMRLPDIVGVELTGKRQPGITATDIVLALTEFLRKEKVVGAYLEFRGEGASSLTLGDRATISNMAPEYGATAAMFFIDEQTIDYLRLTGRTDEQLKLVETYARTAGLWADSLKNAEYERVLKFDLSSVVRNMAGPSNPHKRLPTSALAERGIAVDLDKASAQEAEGLMPDGAVIIAAITSCTNTSNPRNVIAAALLARNANARGLARKPWVKSSLAPGSKAVELYLEEANLLPDLEKLGFGIVAFACTTCNGMSGALDPKIQQEIIDRDLYATAVLSGNRNFDGRIHPYAKQAFLASPPLVVAYAIAGTIRFDIEKDVLGTDQDGKPVYLKDIWPSDEEIDAIVAKSVKPEQFRKVYEPMFAITAASGESVSPLYDWRPQSTYIRRPPYWEGALAGERTLKALRPLAVLGDNITTDHLSPSNAIMLNSAAGEYLARMGLPEEDFNSYATHRGDHLTAQRATFANPTLINEMAVVDGQVKKGSLARIEPEGKVVRMWEAIETYMDRKQPLIIIAGADYGQGSSRDWAAKGVRLAGVEVIVAEGFERIHRTNLIGMGVLPLEFKPGVNRLTLGLDGTETYDVIGERQPRATLTLVVNRKNGERVEVPVTCRLDSDEEVSIYEAGGVLHFAQDFLESSRATA</sequence>
<dbReference type="EC" id="4.2.1.3" evidence="4"/>
<dbReference type="EC" id="4.2.1.99" evidence="3"/>
<dbReference type="EMBL" id="AF325554">
    <property type="protein sequence ID" value="AAL03990.1"/>
    <property type="molecule type" value="Genomic_DNA"/>
</dbReference>
<dbReference type="SMR" id="Q937N8"/>
<dbReference type="UniPathway" id="UPA00223">
    <property type="reaction ID" value="UER00718"/>
</dbReference>
<dbReference type="UniPathway" id="UPA00946"/>
<dbReference type="GO" id="GO:0047456">
    <property type="term" value="F:2-methylisocitrate dehydratase activity"/>
    <property type="evidence" value="ECO:0000250"/>
    <property type="project" value="UniProtKB"/>
</dbReference>
<dbReference type="GO" id="GO:0051539">
    <property type="term" value="F:4 iron, 4 sulfur cluster binding"/>
    <property type="evidence" value="ECO:0000250"/>
    <property type="project" value="UniProtKB"/>
</dbReference>
<dbReference type="GO" id="GO:0003994">
    <property type="term" value="F:aconitate hydratase activity"/>
    <property type="evidence" value="ECO:0000314"/>
    <property type="project" value="UniProtKB"/>
</dbReference>
<dbReference type="GO" id="GO:0046872">
    <property type="term" value="F:metal ion binding"/>
    <property type="evidence" value="ECO:0007669"/>
    <property type="project" value="UniProtKB-KW"/>
</dbReference>
<dbReference type="GO" id="GO:0003730">
    <property type="term" value="F:mRNA 3'-UTR binding"/>
    <property type="evidence" value="ECO:0000250"/>
    <property type="project" value="UniProtKB"/>
</dbReference>
<dbReference type="GO" id="GO:0003729">
    <property type="term" value="F:mRNA binding"/>
    <property type="evidence" value="ECO:0000250"/>
    <property type="project" value="UniProtKB"/>
</dbReference>
<dbReference type="GO" id="GO:0019679">
    <property type="term" value="P:propionate metabolic process, methylcitrate cycle"/>
    <property type="evidence" value="ECO:0000304"/>
    <property type="project" value="UniProtKB"/>
</dbReference>
<dbReference type="GO" id="GO:0006099">
    <property type="term" value="P:tricarboxylic acid cycle"/>
    <property type="evidence" value="ECO:0000304"/>
    <property type="project" value="UniProtKB"/>
</dbReference>
<dbReference type="FunFam" id="3.20.19.10:FF:000006">
    <property type="entry name" value="Aconitate hydratase 1"/>
    <property type="match status" value="1"/>
</dbReference>
<dbReference type="FunFam" id="3.30.499.10:FF:000014">
    <property type="entry name" value="Aconitate hydratase 1"/>
    <property type="match status" value="1"/>
</dbReference>
<dbReference type="FunFam" id="3.30.499.10:FF:000015">
    <property type="entry name" value="Aconitate hydratase 1"/>
    <property type="match status" value="1"/>
</dbReference>
<dbReference type="Gene3D" id="6.10.190.10">
    <property type="match status" value="1"/>
</dbReference>
<dbReference type="Gene3D" id="3.30.499.10">
    <property type="entry name" value="Aconitase, domain 3"/>
    <property type="match status" value="2"/>
</dbReference>
<dbReference type="Gene3D" id="3.20.19.10">
    <property type="entry name" value="Aconitase, domain 4"/>
    <property type="match status" value="1"/>
</dbReference>
<dbReference type="InterPro" id="IPR012708">
    <property type="entry name" value="2Me_IsoCit_deHydtase_FeS-dep"/>
</dbReference>
<dbReference type="InterPro" id="IPR015931">
    <property type="entry name" value="Acnase/IPM_dHydase_lsu_aba_1/3"/>
</dbReference>
<dbReference type="InterPro" id="IPR001030">
    <property type="entry name" value="Acoase/IPM_deHydtase_lsu_aba"/>
</dbReference>
<dbReference type="InterPro" id="IPR015928">
    <property type="entry name" value="Aconitase/3IPM_dehydase_swvl"/>
</dbReference>
<dbReference type="InterPro" id="IPR006249">
    <property type="entry name" value="Aconitase/IRP2"/>
</dbReference>
<dbReference type="InterPro" id="IPR036008">
    <property type="entry name" value="Aconitase_4Fe-4S_dom"/>
</dbReference>
<dbReference type="InterPro" id="IPR000573">
    <property type="entry name" value="AconitaseA/IPMdHydase_ssu_swvl"/>
</dbReference>
<dbReference type="NCBIfam" id="TIGR02333">
    <property type="entry name" value="2met_isocit_dHY"/>
    <property type="match status" value="1"/>
</dbReference>
<dbReference type="NCBIfam" id="TIGR01341">
    <property type="entry name" value="aconitase_1"/>
    <property type="match status" value="1"/>
</dbReference>
<dbReference type="NCBIfam" id="NF006757">
    <property type="entry name" value="PRK09277.1"/>
    <property type="match status" value="1"/>
</dbReference>
<dbReference type="NCBIfam" id="NF009520">
    <property type="entry name" value="PRK12881.1"/>
    <property type="match status" value="1"/>
</dbReference>
<dbReference type="PANTHER" id="PTHR11670">
    <property type="entry name" value="ACONITASE/IRON-RESPONSIVE ELEMENT FAMILY MEMBER"/>
    <property type="match status" value="1"/>
</dbReference>
<dbReference type="Pfam" id="PF00330">
    <property type="entry name" value="Aconitase"/>
    <property type="match status" value="1"/>
</dbReference>
<dbReference type="Pfam" id="PF00694">
    <property type="entry name" value="Aconitase_C"/>
    <property type="match status" value="1"/>
</dbReference>
<dbReference type="PRINTS" id="PR00415">
    <property type="entry name" value="ACONITASE"/>
</dbReference>
<dbReference type="SUPFAM" id="SSF53732">
    <property type="entry name" value="Aconitase iron-sulfur domain"/>
    <property type="match status" value="1"/>
</dbReference>
<dbReference type="SUPFAM" id="SSF52016">
    <property type="entry name" value="LeuD/IlvD-like"/>
    <property type="match status" value="1"/>
</dbReference>
<accession>Q937N8</accession>
<keyword id="KW-0004">4Fe-4S</keyword>
<keyword id="KW-0408">Iron</keyword>
<keyword id="KW-0411">Iron-sulfur</keyword>
<keyword id="KW-0456">Lyase</keyword>
<keyword id="KW-0479">Metal-binding</keyword>
<keyword id="KW-0694">RNA-binding</keyword>
<keyword id="KW-0816">Tricarboxylic acid cycle</keyword>
<name>ACNA_CUPNE</name>
<evidence type="ECO:0000250" key="1">
    <source>
        <dbReference type="UniProtKB" id="P09339"/>
    </source>
</evidence>
<evidence type="ECO:0000250" key="2">
    <source>
        <dbReference type="UniProtKB" id="P36683"/>
    </source>
</evidence>
<evidence type="ECO:0000250" key="3">
    <source>
        <dbReference type="UniProtKB" id="Q8ZP52"/>
    </source>
</evidence>
<evidence type="ECO:0000269" key="4">
    <source>
    </source>
</evidence>
<evidence type="ECO:0000303" key="5">
    <source>
    </source>
</evidence>
<evidence type="ECO:0000305" key="6"/>
<evidence type="ECO:0000305" key="7">
    <source>
    </source>
</evidence>
<comment type="function">
    <text evidence="3 4">Involved in the catabolism of short chain fatty acids (SCFA) via the tricarboxylic acid (TCA)(acetyl degradation route) and the 2-methylcitrate cycle I (propionate degradation route). Catalyzes the reversible isomerization of citrate to isocitrate via cis-aconitate (PubMed:11495997). Could catalyze the hydration of 2-methyl-cis-aconitate to yield (2S,3R)-2-methylisocitrate. The apo form of AcnA functions as a RNA-binding regulatory protein (By similarity).</text>
</comment>
<comment type="catalytic activity">
    <reaction evidence="4">
        <text>citrate = D-threo-isocitrate</text>
        <dbReference type="Rhea" id="RHEA:10336"/>
        <dbReference type="ChEBI" id="CHEBI:15562"/>
        <dbReference type="ChEBI" id="CHEBI:16947"/>
        <dbReference type="EC" id="4.2.1.3"/>
    </reaction>
</comment>
<comment type="catalytic activity">
    <reaction evidence="3">
        <text>(2S,3R)-3-hydroxybutane-1,2,3-tricarboxylate = 2-methyl-cis-aconitate + H2O</text>
        <dbReference type="Rhea" id="RHEA:17941"/>
        <dbReference type="ChEBI" id="CHEBI:15377"/>
        <dbReference type="ChEBI" id="CHEBI:57429"/>
        <dbReference type="ChEBI" id="CHEBI:57872"/>
        <dbReference type="EC" id="4.2.1.99"/>
    </reaction>
</comment>
<comment type="cofactor">
    <cofactor evidence="1">
        <name>[4Fe-4S] cluster</name>
        <dbReference type="ChEBI" id="CHEBI:49883"/>
    </cofactor>
    <text evidence="1">Binds 1 [4Fe-4S] cluster per subunit.</text>
</comment>
<comment type="pathway">
    <text evidence="7">Carbohydrate metabolism; tricarboxylic acid cycle; isocitrate from oxaloacetate: step 2/2.</text>
</comment>
<comment type="pathway">
    <text evidence="7">Organic acid metabolism; propanoate degradation.</text>
</comment>
<comment type="subunit">
    <text evidence="1">Monomer.</text>
</comment>
<comment type="similarity">
    <text evidence="6">Belongs to the aconitase/IPM isomerase family.</text>
</comment>
<reference key="1">
    <citation type="journal article" date="2001" name="Microbiology">
        <title>The methylcitric acid pathway in Ralstonia eutropha: new genes identified involved in propionate metabolism.</title>
        <authorList>
            <person name="Bramer C.O."/>
            <person name="Steinbuchel A."/>
        </authorList>
    </citation>
    <scope>NUCLEOTIDE SEQUENCE [GENOMIC DNA]</scope>
    <scope>FUNCTION</scope>
    <scope>CATALYTIC ACTIVITY</scope>
    <scope>SUBSTRATE SPECIFICITY</scope>
    <source>
        <strain>HF39</strain>
    </source>
</reference>
<organism>
    <name type="scientific">Cupriavidus necator</name>
    <name type="common">Alcaligenes eutrophus</name>
    <name type="synonym">Ralstonia eutropha</name>
    <dbReference type="NCBI Taxonomy" id="106590"/>
    <lineage>
        <taxon>Bacteria</taxon>
        <taxon>Pseudomonadati</taxon>
        <taxon>Pseudomonadota</taxon>
        <taxon>Betaproteobacteria</taxon>
        <taxon>Burkholderiales</taxon>
        <taxon>Burkholderiaceae</taxon>
        <taxon>Cupriavidus</taxon>
    </lineage>
</organism>